<feature type="chain" id="PRO_0000099132" description="DNA-directed RNA polymerase 35 kDa subunit">
    <location>
        <begin position="1"/>
        <end position="305"/>
    </location>
</feature>
<comment type="function">
    <text evidence="1">Part of the DNA-dependent RNA polymerase which catalyzes the transcription of viral DNA into RNA using the four ribonucleoside triphosphates as substrates. Responsible for the transcription of early, intermediate and late genes. DNA-dependent RNA polymerase associates with the early transcription factor (ETF), itself composed of D6 and A7, thereby allowing the early genes transcription. Late transcription, and probably also intermediate transcription, require newly synthesized RNA polymerase.</text>
</comment>
<comment type="catalytic activity">
    <reaction evidence="1">
        <text>RNA(n) + a ribonucleoside 5'-triphosphate = RNA(n+1) + diphosphate</text>
        <dbReference type="Rhea" id="RHEA:21248"/>
        <dbReference type="Rhea" id="RHEA-COMP:14527"/>
        <dbReference type="Rhea" id="RHEA-COMP:17342"/>
        <dbReference type="ChEBI" id="CHEBI:33019"/>
        <dbReference type="ChEBI" id="CHEBI:61557"/>
        <dbReference type="ChEBI" id="CHEBI:140395"/>
        <dbReference type="EC" id="2.7.7.6"/>
    </reaction>
</comment>
<comment type="subunit">
    <text evidence="1">The DNA-dependent RNA polymerase used for intermediate and late genes expression consists of eight subunits 147 kDa, 133 kDa, 35 kDa, 30 kDa, 22 kDa, 19 kDa, 18 kDa and 7 kDa totalling more than 500 kDa in mass. The same holoenzyme, with the addition of the transcription-specificity factor RAP94, is used for early gene expression.</text>
</comment>
<comment type="subcellular location">
    <subcellularLocation>
        <location evidence="1">Virion</location>
    </subcellularLocation>
    <text evidence="1">All the enzymes and other proteins required to synthesize early mRNAs are packaged within the virion core along with the DNA genome. This is necessary because viral early mRNAs are synthesized within minutes after virus entry into the cell and are extruded through pores in the core particle.</text>
</comment>
<comment type="similarity">
    <text evidence="2">Belongs to the poxviridae DNA-directed RNA polymerase 35 kDa subunit family.</text>
</comment>
<evidence type="ECO:0000250" key="1">
    <source>
        <dbReference type="UniProtKB" id="P24757"/>
    </source>
</evidence>
<evidence type="ECO:0000305" key="2"/>
<proteinExistence type="evidence at protein level"/>
<protein>
    <recommendedName>
        <fullName>DNA-directed RNA polymerase 35 kDa subunit</fullName>
        <ecNumber>2.7.7.6</ecNumber>
    </recommendedName>
</protein>
<accession>P21087</accession>
<keyword id="KW-0002">3D-structure</keyword>
<keyword id="KW-0240">DNA-directed RNA polymerase</keyword>
<keyword id="KW-0548">Nucleotidyltransferase</keyword>
<keyword id="KW-0597">Phosphoprotein</keyword>
<keyword id="KW-1185">Reference proteome</keyword>
<keyword id="KW-0804">Transcription</keyword>
<keyword id="KW-0808">Transferase</keyword>
<keyword id="KW-0946">Virion</keyword>
<dbReference type="EC" id="2.7.7.6"/>
<dbReference type="EMBL" id="M35027">
    <property type="protein sequence ID" value="AAA48154.1"/>
    <property type="molecule type" value="Genomic_DNA"/>
</dbReference>
<dbReference type="PIR" id="D42520">
    <property type="entry name" value="RNVZC5"/>
</dbReference>
<dbReference type="PDB" id="8P0J">
    <property type="method" value="EM"/>
    <property type="resolution" value="2.39 A"/>
    <property type="chains" value="C=1-305"/>
</dbReference>
<dbReference type="PDB" id="8P0K">
    <property type="method" value="EM"/>
    <property type="resolution" value="2.64 A"/>
    <property type="chains" value="C=1-305"/>
</dbReference>
<dbReference type="PDB" id="8P0N">
    <property type="method" value="EM"/>
    <property type="resolution" value="2.58 A"/>
    <property type="chains" value="C=1-305"/>
</dbReference>
<dbReference type="PDB" id="8RQK">
    <property type="method" value="EM"/>
    <property type="resolution" value="2.65 A"/>
    <property type="chains" value="C=1-305"/>
</dbReference>
<dbReference type="PDBsum" id="8P0J"/>
<dbReference type="PDBsum" id="8P0K"/>
<dbReference type="PDBsum" id="8P0N"/>
<dbReference type="PDBsum" id="8RQK"/>
<dbReference type="EMDB" id="EMD-17334"/>
<dbReference type="EMDB" id="EMD-17335"/>
<dbReference type="EMDB" id="EMD-17336"/>
<dbReference type="EMDB" id="EMD-19442"/>
<dbReference type="SMR" id="P21087"/>
<dbReference type="Proteomes" id="UP000008269">
    <property type="component" value="Segment"/>
</dbReference>
<dbReference type="GO" id="GO:0000428">
    <property type="term" value="C:DNA-directed RNA polymerase complex"/>
    <property type="evidence" value="ECO:0007669"/>
    <property type="project" value="UniProtKB-KW"/>
</dbReference>
<dbReference type="GO" id="GO:0044423">
    <property type="term" value="C:virion component"/>
    <property type="evidence" value="ECO:0007669"/>
    <property type="project" value="UniProtKB-KW"/>
</dbReference>
<dbReference type="GO" id="GO:0003677">
    <property type="term" value="F:DNA binding"/>
    <property type="evidence" value="ECO:0007669"/>
    <property type="project" value="InterPro"/>
</dbReference>
<dbReference type="GO" id="GO:0003899">
    <property type="term" value="F:DNA-directed RNA polymerase activity"/>
    <property type="evidence" value="ECO:0007669"/>
    <property type="project" value="UniProtKB-EC"/>
</dbReference>
<dbReference type="GO" id="GO:0019083">
    <property type="term" value="P:viral transcription"/>
    <property type="evidence" value="ECO:0007669"/>
    <property type="project" value="InterPro"/>
</dbReference>
<dbReference type="InterPro" id="IPR005059">
    <property type="entry name" value="DNA-dir_RNA_pol_35kDa_poxviral"/>
</dbReference>
<dbReference type="Pfam" id="PF03396">
    <property type="entry name" value="Pox_RNA_pol_35"/>
    <property type="match status" value="1"/>
</dbReference>
<dbReference type="PIRSF" id="PIRSF000746">
    <property type="entry name" value="Rpo35"/>
    <property type="match status" value="1"/>
</dbReference>
<reference key="1">
    <citation type="journal article" date="1990" name="Virology">
        <title>The complete DNA sequence of vaccinia virus.</title>
        <authorList>
            <person name="Goebel S.J."/>
            <person name="Johnson G.P."/>
            <person name="Perkus M.E."/>
            <person name="Davis S.W."/>
            <person name="Winslow J.P."/>
            <person name="Paoletti E."/>
        </authorList>
    </citation>
    <scope>NUCLEOTIDE SEQUENCE [LARGE SCALE GENOMIC DNA]</scope>
</reference>
<reference key="2">
    <citation type="journal article" date="1990" name="Virology">
        <title>Appendix to 'The complete DNA sequence of vaccinia virus'.</title>
        <authorList>
            <person name="Goebel S.J."/>
            <person name="Johnson G.P."/>
            <person name="Perkus M.E."/>
            <person name="Davis S.W."/>
            <person name="Winslow J.P."/>
            <person name="Paoletti E."/>
        </authorList>
    </citation>
    <scope>NUCLEOTIDE SEQUENCE [LARGE SCALE GENOMIC DNA]</scope>
</reference>
<reference key="3">
    <citation type="journal article" date="2003" name="J. Gen. Virol.">
        <title>Vaccinia virus transcription.</title>
        <authorList>
            <person name="Broyles S.S."/>
        </authorList>
    </citation>
    <scope>REVIEW</scope>
</reference>
<gene>
    <name type="primary">OPG156</name>
    <name type="synonym">RPO35</name>
    <name type="ORF">A29L</name>
</gene>
<name>RP35_VACCC</name>
<sequence>MQHPREENSIVVELEPSLATFIKQGFNNLVKWPLLNIGIVLSNTSTAVNEEWLTAVEHIPTMKIFYKHIHKILTREMGFLVYLKRSQSERDNYITLYDFDYYIIDKDTNSVTMVDKPTELKETLLHVFQEYRLKSSQTIELIAFSSGTVINEDIVSKLTFLDVEVFNREYNNVKTIIDPDFVFRSPFIVISPMGKLTFFVEVYSWFDFKSCFKDIIDFLEGALIANIHNHMIKVGDCDETVSSYNPESGMLFVNDLMTMNIVNFFGCNSRLESYHRFDMTKVDVELFIKALSDACKKILSASNRL</sequence>
<organismHost>
    <name type="scientific">Homo sapiens</name>
    <name type="common">Human</name>
    <dbReference type="NCBI Taxonomy" id="9606"/>
</organismHost>
<organism>
    <name type="scientific">Vaccinia virus (strain Copenhagen)</name>
    <name type="common">VACV</name>
    <dbReference type="NCBI Taxonomy" id="10249"/>
    <lineage>
        <taxon>Viruses</taxon>
        <taxon>Varidnaviria</taxon>
        <taxon>Bamfordvirae</taxon>
        <taxon>Nucleocytoviricota</taxon>
        <taxon>Pokkesviricetes</taxon>
        <taxon>Chitovirales</taxon>
        <taxon>Poxviridae</taxon>
        <taxon>Chordopoxvirinae</taxon>
        <taxon>Orthopoxvirus</taxon>
        <taxon>Vaccinia virus</taxon>
    </lineage>
</organism>